<comment type="function">
    <text evidence="1">Involved in the heme biosynthesis. Catalyzes the aerobic oxidative decarboxylation of propionate groups of rings A and B of coproporphyrinogen-III to yield the vinyl groups in protoporphyrinogen-IX.</text>
</comment>
<comment type="catalytic activity">
    <reaction evidence="1">
        <text>coproporphyrinogen III + O2 + 2 H(+) = protoporphyrinogen IX + 2 CO2 + 2 H2O</text>
        <dbReference type="Rhea" id="RHEA:18257"/>
        <dbReference type="ChEBI" id="CHEBI:15377"/>
        <dbReference type="ChEBI" id="CHEBI:15378"/>
        <dbReference type="ChEBI" id="CHEBI:15379"/>
        <dbReference type="ChEBI" id="CHEBI:16526"/>
        <dbReference type="ChEBI" id="CHEBI:57307"/>
        <dbReference type="ChEBI" id="CHEBI:57309"/>
        <dbReference type="EC" id="1.3.3.3"/>
    </reaction>
</comment>
<comment type="cofactor">
    <cofactor evidence="1">
        <name>a divalent metal cation</name>
        <dbReference type="ChEBI" id="CHEBI:60240"/>
    </cofactor>
</comment>
<comment type="pathway">
    <text evidence="1">Porphyrin-containing compound metabolism; protoporphyrin-IX biosynthesis; protoporphyrinogen-IX from coproporphyrinogen-III (O2 route): step 1/1.</text>
</comment>
<comment type="subunit">
    <text evidence="1">Homodimer.</text>
</comment>
<comment type="subcellular location">
    <subcellularLocation>
        <location evidence="1">Cytoplasm</location>
    </subcellularLocation>
</comment>
<comment type="similarity">
    <text evidence="1">Belongs to the aerobic coproporphyrinogen-III oxidase family.</text>
</comment>
<reference key="1">
    <citation type="journal article" date="2002" name="Nature">
        <title>Comparison of the genomes of two Xanthomonas pathogens with differing host specificities.</title>
        <authorList>
            <person name="da Silva A.C.R."/>
            <person name="Ferro J.A."/>
            <person name="Reinach F.C."/>
            <person name="Farah C.S."/>
            <person name="Furlan L.R."/>
            <person name="Quaggio R.B."/>
            <person name="Monteiro-Vitorello C.B."/>
            <person name="Van Sluys M.A."/>
            <person name="Almeida N.F. Jr."/>
            <person name="Alves L.M.C."/>
            <person name="do Amaral A.M."/>
            <person name="Bertolini M.C."/>
            <person name="Camargo L.E.A."/>
            <person name="Camarotte G."/>
            <person name="Cannavan F."/>
            <person name="Cardozo J."/>
            <person name="Chambergo F."/>
            <person name="Ciapina L.P."/>
            <person name="Cicarelli R.M.B."/>
            <person name="Coutinho L.L."/>
            <person name="Cursino-Santos J.R."/>
            <person name="El-Dorry H."/>
            <person name="Faria J.B."/>
            <person name="Ferreira A.J.S."/>
            <person name="Ferreira R.C.C."/>
            <person name="Ferro M.I.T."/>
            <person name="Formighieri E.F."/>
            <person name="Franco M.C."/>
            <person name="Greggio C.C."/>
            <person name="Gruber A."/>
            <person name="Katsuyama A.M."/>
            <person name="Kishi L.T."/>
            <person name="Leite R.P."/>
            <person name="Lemos E.G.M."/>
            <person name="Lemos M.V.F."/>
            <person name="Locali E.C."/>
            <person name="Machado M.A."/>
            <person name="Madeira A.M.B.N."/>
            <person name="Martinez-Rossi N.M."/>
            <person name="Martins E.C."/>
            <person name="Meidanis J."/>
            <person name="Menck C.F.M."/>
            <person name="Miyaki C.Y."/>
            <person name="Moon D.H."/>
            <person name="Moreira L.M."/>
            <person name="Novo M.T.M."/>
            <person name="Okura V.K."/>
            <person name="Oliveira M.C."/>
            <person name="Oliveira V.R."/>
            <person name="Pereira H.A."/>
            <person name="Rossi A."/>
            <person name="Sena J.A.D."/>
            <person name="Silva C."/>
            <person name="de Souza R.F."/>
            <person name="Spinola L.A.F."/>
            <person name="Takita M.A."/>
            <person name="Tamura R.E."/>
            <person name="Teixeira E.C."/>
            <person name="Tezza R.I.D."/>
            <person name="Trindade dos Santos M."/>
            <person name="Truffi D."/>
            <person name="Tsai S.M."/>
            <person name="White F.F."/>
            <person name="Setubal J.C."/>
            <person name="Kitajima J.P."/>
        </authorList>
    </citation>
    <scope>NUCLEOTIDE SEQUENCE [LARGE SCALE GENOMIC DNA]</scope>
    <source>
        <strain>ATCC 33913 / DSM 3586 / NCPPB 528 / LMG 568 / P 25</strain>
    </source>
</reference>
<proteinExistence type="inferred from homology"/>
<gene>
    <name evidence="1" type="primary">hemF</name>
    <name type="ordered locus">XCC4019</name>
</gene>
<organism>
    <name type="scientific">Xanthomonas campestris pv. campestris (strain ATCC 33913 / DSM 3586 / NCPPB 528 / LMG 568 / P 25)</name>
    <dbReference type="NCBI Taxonomy" id="190485"/>
    <lineage>
        <taxon>Bacteria</taxon>
        <taxon>Pseudomonadati</taxon>
        <taxon>Pseudomonadota</taxon>
        <taxon>Gammaproteobacteria</taxon>
        <taxon>Lysobacterales</taxon>
        <taxon>Lysobacteraceae</taxon>
        <taxon>Xanthomonas</taxon>
    </lineage>
</organism>
<feature type="chain" id="PRO_0000109932" description="Oxygen-dependent coproporphyrinogen-III oxidase">
    <location>
        <begin position="1"/>
        <end position="299"/>
    </location>
</feature>
<feature type="region of interest" description="Important for dimerization" evidence="1">
    <location>
        <begin position="239"/>
        <end position="274"/>
    </location>
</feature>
<feature type="active site" description="Proton donor" evidence="1">
    <location>
        <position position="106"/>
    </location>
</feature>
<feature type="binding site" evidence="1">
    <location>
        <position position="92"/>
    </location>
    <ligand>
        <name>substrate</name>
    </ligand>
</feature>
<feature type="binding site" evidence="1">
    <location>
        <position position="96"/>
    </location>
    <ligand>
        <name>a divalent metal cation</name>
        <dbReference type="ChEBI" id="CHEBI:60240"/>
    </ligand>
</feature>
<feature type="binding site" evidence="1">
    <location>
        <position position="106"/>
    </location>
    <ligand>
        <name>a divalent metal cation</name>
        <dbReference type="ChEBI" id="CHEBI:60240"/>
    </ligand>
</feature>
<feature type="binding site" evidence="1">
    <location>
        <begin position="108"/>
        <end position="110"/>
    </location>
    <ligand>
        <name>substrate</name>
    </ligand>
</feature>
<feature type="binding site" evidence="1">
    <location>
        <position position="145"/>
    </location>
    <ligand>
        <name>a divalent metal cation</name>
        <dbReference type="ChEBI" id="CHEBI:60240"/>
    </ligand>
</feature>
<feature type="binding site" evidence="1">
    <location>
        <position position="175"/>
    </location>
    <ligand>
        <name>a divalent metal cation</name>
        <dbReference type="ChEBI" id="CHEBI:60240"/>
    </ligand>
</feature>
<feature type="binding site" evidence="1">
    <location>
        <begin position="257"/>
        <end position="259"/>
    </location>
    <ligand>
        <name>substrate</name>
    </ligand>
</feature>
<feature type="site" description="Important for dimerization" evidence="1">
    <location>
        <position position="175"/>
    </location>
</feature>
<sequence>MNEFDRVRDYLTDLQDRICAAVEAIDGKARFAEDLWQRAEGGGGRTRILRDGAVFEQAGIGFSDVSGARLPPSASAHRPELAGATWRACGVSLVFHPHNPHIPTTHANVRYFRAERDGEMVAAWFGGGFDLTPFYPVDEDVMHWHRTAQALCAPFGEERYAAHKRWCDEYFFLRHRNETRGVGGLFFDDLGQDFERDFAYQRAVGDGFLDAYLPIVERRKDTPYGEAERAFQLYRRGRYVEFNLVYDRGTLFGLQSGGRAESILMSLPPQVRWEYGFQPQPGSAEARLADYLIPRDWLG</sequence>
<name>HEM6_XANCP</name>
<protein>
    <recommendedName>
        <fullName evidence="1">Oxygen-dependent coproporphyrinogen-III oxidase</fullName>
        <shortName evidence="1">CPO</shortName>
        <shortName evidence="1">Coprogen oxidase</shortName>
        <shortName evidence="1">Coproporphyrinogenase</shortName>
        <ecNumber evidence="1">1.3.3.3</ecNumber>
    </recommendedName>
</protein>
<keyword id="KW-0963">Cytoplasm</keyword>
<keyword id="KW-0350">Heme biosynthesis</keyword>
<keyword id="KW-0479">Metal-binding</keyword>
<keyword id="KW-0560">Oxidoreductase</keyword>
<keyword id="KW-0627">Porphyrin biosynthesis</keyword>
<keyword id="KW-1185">Reference proteome</keyword>
<evidence type="ECO:0000255" key="1">
    <source>
        <dbReference type="HAMAP-Rule" id="MF_00333"/>
    </source>
</evidence>
<dbReference type="EC" id="1.3.3.3" evidence="1"/>
<dbReference type="EMBL" id="AE008922">
    <property type="protein sequence ID" value="AAM43240.1"/>
    <property type="molecule type" value="Genomic_DNA"/>
</dbReference>
<dbReference type="RefSeq" id="NP_639358.1">
    <property type="nucleotide sequence ID" value="NC_003902.1"/>
</dbReference>
<dbReference type="RefSeq" id="WP_011039090.1">
    <property type="nucleotide sequence ID" value="NC_003902.1"/>
</dbReference>
<dbReference type="SMR" id="Q8P3Q0"/>
<dbReference type="STRING" id="190485.XCC4019"/>
<dbReference type="EnsemblBacteria" id="AAM43240">
    <property type="protein sequence ID" value="AAM43240"/>
    <property type="gene ID" value="XCC4019"/>
</dbReference>
<dbReference type="GeneID" id="58015328"/>
<dbReference type="KEGG" id="xcc:XCC4019"/>
<dbReference type="PATRIC" id="fig|190485.4.peg.4305"/>
<dbReference type="eggNOG" id="COG0408">
    <property type="taxonomic scope" value="Bacteria"/>
</dbReference>
<dbReference type="HOGENOM" id="CLU_026169_0_1_6"/>
<dbReference type="OrthoDB" id="9777553at2"/>
<dbReference type="UniPathway" id="UPA00251">
    <property type="reaction ID" value="UER00322"/>
</dbReference>
<dbReference type="Proteomes" id="UP000001010">
    <property type="component" value="Chromosome"/>
</dbReference>
<dbReference type="GO" id="GO:0005737">
    <property type="term" value="C:cytoplasm"/>
    <property type="evidence" value="ECO:0000318"/>
    <property type="project" value="GO_Central"/>
</dbReference>
<dbReference type="GO" id="GO:0004109">
    <property type="term" value="F:coproporphyrinogen oxidase activity"/>
    <property type="evidence" value="ECO:0000318"/>
    <property type="project" value="GO_Central"/>
</dbReference>
<dbReference type="GO" id="GO:0046872">
    <property type="term" value="F:metal ion binding"/>
    <property type="evidence" value="ECO:0007669"/>
    <property type="project" value="UniProtKB-KW"/>
</dbReference>
<dbReference type="GO" id="GO:0042803">
    <property type="term" value="F:protein homodimerization activity"/>
    <property type="evidence" value="ECO:0000250"/>
    <property type="project" value="UniProtKB"/>
</dbReference>
<dbReference type="GO" id="GO:0006782">
    <property type="term" value="P:protoporphyrinogen IX biosynthetic process"/>
    <property type="evidence" value="ECO:0000318"/>
    <property type="project" value="GO_Central"/>
</dbReference>
<dbReference type="FunFam" id="3.40.1500.10:FF:000001">
    <property type="entry name" value="Oxygen-dependent coproporphyrinogen-III oxidase"/>
    <property type="match status" value="1"/>
</dbReference>
<dbReference type="Gene3D" id="3.40.1500.10">
    <property type="entry name" value="Coproporphyrinogen III oxidase, aerobic"/>
    <property type="match status" value="1"/>
</dbReference>
<dbReference type="HAMAP" id="MF_00333">
    <property type="entry name" value="Coprogen_oxidas"/>
    <property type="match status" value="1"/>
</dbReference>
<dbReference type="InterPro" id="IPR001260">
    <property type="entry name" value="Coprogen_oxidase_aer"/>
</dbReference>
<dbReference type="InterPro" id="IPR036406">
    <property type="entry name" value="Coprogen_oxidase_aer_sf"/>
</dbReference>
<dbReference type="InterPro" id="IPR018375">
    <property type="entry name" value="Coprogen_oxidase_CS"/>
</dbReference>
<dbReference type="NCBIfam" id="NF003727">
    <property type="entry name" value="PRK05330.1"/>
    <property type="match status" value="1"/>
</dbReference>
<dbReference type="PANTHER" id="PTHR10755">
    <property type="entry name" value="COPROPORPHYRINOGEN III OXIDASE, MITOCHONDRIAL"/>
    <property type="match status" value="1"/>
</dbReference>
<dbReference type="PANTHER" id="PTHR10755:SF0">
    <property type="entry name" value="OXYGEN-DEPENDENT COPROPORPHYRINOGEN-III OXIDASE, MITOCHONDRIAL"/>
    <property type="match status" value="1"/>
</dbReference>
<dbReference type="Pfam" id="PF01218">
    <property type="entry name" value="Coprogen_oxidas"/>
    <property type="match status" value="1"/>
</dbReference>
<dbReference type="PIRSF" id="PIRSF000166">
    <property type="entry name" value="Coproporphyri_ox"/>
    <property type="match status" value="1"/>
</dbReference>
<dbReference type="PRINTS" id="PR00073">
    <property type="entry name" value="COPRGNOXDASE"/>
</dbReference>
<dbReference type="SUPFAM" id="SSF102886">
    <property type="entry name" value="Coproporphyrinogen III oxidase"/>
    <property type="match status" value="1"/>
</dbReference>
<dbReference type="PROSITE" id="PS01021">
    <property type="entry name" value="COPROGEN_OXIDASE"/>
    <property type="match status" value="1"/>
</dbReference>
<accession>Q8P3Q0</accession>